<keyword id="KW-0002">3D-structure</keyword>
<keyword id="KW-0997">Cell inner membrane</keyword>
<keyword id="KW-1003">Cell membrane</keyword>
<keyword id="KW-0406">Ion transport</keyword>
<keyword id="KW-0472">Membrane</keyword>
<keyword id="KW-0500">Molybdenum</keyword>
<keyword id="KW-1185">Reference proteome</keyword>
<keyword id="KW-0812">Transmembrane</keyword>
<keyword id="KW-1133">Transmembrane helix</keyword>
<keyword id="KW-0813">Transport</keyword>
<sequence>MQPDSYPKILFGLTLLLVITAVISLGIGRYSLSVPQIGQILWAKATALEIDPVQQQVIFQVRLPRILTALCVGAGLALSGVVLQGIFRNPLVNPHIIGVTSGSAFGGTLAIFFGFSLYGLFTSTILFGFGTLALVFLFSFKFNQRSLLMLILIGMILSGLFSALVSLLQYISDTEEKLPSIVFWLMGSFATSNWEKLLFFFVPFLLCSSILLSLSWRLNLLSLDEKEAKALGVKMAPLRWLVIFLSGSLVACQVAISGSIGWVGLIIPHLSRMLVGANHQSLLPCTMLVGATYMLLVDNVARSLSDAEIPISILTALIGAPLFGVLVYKLKRGGMNE</sequence>
<proteinExistence type="evidence at protein level"/>
<reference key="1">
    <citation type="journal article" date="1995" name="Science">
        <title>Whole-genome random sequencing and assembly of Haemophilus influenzae Rd.</title>
        <authorList>
            <person name="Fleischmann R.D."/>
            <person name="Adams M.D."/>
            <person name="White O."/>
            <person name="Clayton R.A."/>
            <person name="Kirkness E.F."/>
            <person name="Kerlavage A.R."/>
            <person name="Bult C.J."/>
            <person name="Tomb J.-F."/>
            <person name="Dougherty B.A."/>
            <person name="Merrick J.M."/>
            <person name="McKenney K."/>
            <person name="Sutton G.G."/>
            <person name="FitzHugh W."/>
            <person name="Fields C.A."/>
            <person name="Gocayne J.D."/>
            <person name="Scott J.D."/>
            <person name="Shirley R."/>
            <person name="Liu L.-I."/>
            <person name="Glodek A."/>
            <person name="Kelley J.M."/>
            <person name="Weidman J.F."/>
            <person name="Phillips C.A."/>
            <person name="Spriggs T."/>
            <person name="Hedblom E."/>
            <person name="Cotton M.D."/>
            <person name="Utterback T.R."/>
            <person name="Hanna M.C."/>
            <person name="Nguyen D.T."/>
            <person name="Saudek D.M."/>
            <person name="Brandon R.C."/>
            <person name="Fine L.D."/>
            <person name="Fritchman J.L."/>
            <person name="Fuhrmann J.L."/>
            <person name="Geoghagen N.S.M."/>
            <person name="Gnehm C.L."/>
            <person name="McDonald L.A."/>
            <person name="Small K.V."/>
            <person name="Fraser C.M."/>
            <person name="Smith H.O."/>
            <person name="Venter J.C."/>
        </authorList>
    </citation>
    <scope>NUCLEOTIDE SEQUENCE [LARGE SCALE GENOMIC DNA]</scope>
    <source>
        <strain>ATCC 51907 / DSM 11121 / KW20 / Rd</strain>
    </source>
</reference>
<reference key="2">
    <citation type="journal article" date="2009" name="Biophys. J.">
        <title>Asymmetric conformational flexibility in the ATP-binding cassette transporter HI1470/1.</title>
        <authorList>
            <person name="Weng J."/>
            <person name="Ma J."/>
            <person name="Fan K."/>
            <person name="Wang W."/>
        </authorList>
    </citation>
    <scope>SUBUNIT</scope>
    <scope>DOMAIN</scope>
</reference>
<reference key="3">
    <citation type="journal article" date="2010" name="Nat. Struct. Mol. Biol.">
        <title>A distinct mechanism for the ABC transporter BtuCD-BtuF revealed by the dynamics of complex formation.</title>
        <authorList>
            <person name="Lewinson O."/>
            <person name="Lee A.T."/>
            <person name="Locher K.P."/>
            <person name="Rees D.C."/>
        </authorList>
    </citation>
    <scope>SUBUNIT</scope>
</reference>
<reference key="4">
    <citation type="journal article" date="2011" name="Structure">
        <title>Classification of a Haemophilus influenzae ABC transporter HI1470/71 through its cognate molybdate periplasmic binding protein, MolA.</title>
        <authorList>
            <person name="Tirado-Lee L."/>
            <person name="Lee A."/>
            <person name="Rees D.C."/>
            <person name="Pinkett H.W."/>
        </authorList>
    </citation>
    <scope>FUNCTION</scope>
</reference>
<reference key="5">
    <citation type="journal article" date="2013" name="Proc. Natl. Acad. Sci. U.S.A.">
        <title>Two molybdate/tungstate ABC transporters that interact very differently with their substrate binding proteins.</title>
        <authorList>
            <person name="Vigonsky E."/>
            <person name="Ovcharenko E."/>
            <person name="Lewinson O."/>
        </authorList>
    </citation>
    <scope>SUBUNIT</scope>
    <scope>ACTIVITY REGULATION</scope>
</reference>
<reference key="6">
    <citation type="journal article" date="2013" name="J. Biol. Chem.">
        <title>EPR spectroscopy of MolB2C2-a reveals mechanism of transport for a bacterial type II molybdate importer.</title>
        <authorList>
            <person name="Rice A.J."/>
            <person name="Alvarez F.J."/>
            <person name="Schultz K.M."/>
            <person name="Klug C.S."/>
            <person name="Davidson A.L."/>
            <person name="Pinkett H.W."/>
        </authorList>
    </citation>
    <scope>SUBUNIT</scope>
    <scope>DOMAIN</scope>
</reference>
<reference key="7">
    <citation type="journal article" date="2014" name="J. Biol. Chem.">
        <title>Small substrate transport and mechanism of a molybdate ATP binding cassette transporter in a lipid environment.</title>
        <authorList>
            <person name="Rice A.J."/>
            <person name="Harrison A."/>
            <person name="Alvarez F.J."/>
            <person name="Davidson A.L."/>
            <person name="Pinkett H.W."/>
        </authorList>
    </citation>
    <scope>FUNCTION</scope>
    <scope>INDUCTION</scope>
</reference>
<reference evidence="10" key="8">
    <citation type="journal article" date="2007" name="Science">
        <title>An inward-facing conformation of a putative metal-chelate-type ABC transporter.</title>
        <authorList>
            <person name="Pinkett H.W."/>
            <person name="Lee A.T."/>
            <person name="Lum P."/>
            <person name="Locher K.P."/>
            <person name="Rees D.C."/>
        </authorList>
    </citation>
    <scope>X-RAY CRYSTALLOGRAPHY (2.40 ANGSTROMS) IN COMPLEX WITH MOLC</scope>
    <scope>SUBUNIT</scope>
    <scope>SUBCELLULAR LOCATION</scope>
    <scope>TOPOLOGY</scope>
    <source>
        <strain>ATCC 51907 / DSM 11121 / KW20 / Rd</strain>
    </source>
</reference>
<organism>
    <name type="scientific">Haemophilus influenzae (strain ATCC 51907 / DSM 11121 / KW20 / Rd)</name>
    <dbReference type="NCBI Taxonomy" id="71421"/>
    <lineage>
        <taxon>Bacteria</taxon>
        <taxon>Pseudomonadati</taxon>
        <taxon>Pseudomonadota</taxon>
        <taxon>Gammaproteobacteria</taxon>
        <taxon>Pasteurellales</taxon>
        <taxon>Pasteurellaceae</taxon>
        <taxon>Haemophilus</taxon>
    </lineage>
</organism>
<evidence type="ECO:0000269" key="1">
    <source>
    </source>
</evidence>
<evidence type="ECO:0000269" key="2">
    <source>
    </source>
</evidence>
<evidence type="ECO:0000269" key="3">
    <source>
    </source>
</evidence>
<evidence type="ECO:0000269" key="4">
    <source>
    </source>
</evidence>
<evidence type="ECO:0000269" key="5">
    <source>
    </source>
</evidence>
<evidence type="ECO:0000269" key="6">
    <source>
    </source>
</evidence>
<evidence type="ECO:0000269" key="7">
    <source>
    </source>
</evidence>
<evidence type="ECO:0000303" key="8">
    <source>
    </source>
</evidence>
<evidence type="ECO:0000305" key="9"/>
<evidence type="ECO:0007744" key="10">
    <source>
        <dbReference type="PDB" id="2NQ2"/>
    </source>
</evidence>
<evidence type="ECO:0007829" key="11">
    <source>
        <dbReference type="PDB" id="2NQ2"/>
    </source>
</evidence>
<gene>
    <name evidence="8" type="primary">molB</name>
    <name type="ordered locus">HI_1471</name>
</gene>
<dbReference type="EMBL" id="L42023">
    <property type="protein sequence ID" value="AAC23119.1"/>
    <property type="molecule type" value="Genomic_DNA"/>
</dbReference>
<dbReference type="PIR" id="G64125">
    <property type="entry name" value="G64125"/>
</dbReference>
<dbReference type="RefSeq" id="NP_439622.1">
    <property type="nucleotide sequence ID" value="NC_000907.1"/>
</dbReference>
<dbReference type="PDB" id="2NQ2">
    <property type="method" value="X-ray"/>
    <property type="resolution" value="2.40 A"/>
    <property type="chains" value="A/B=1-337"/>
</dbReference>
<dbReference type="PDBsum" id="2NQ2"/>
<dbReference type="SMR" id="Q57130"/>
<dbReference type="DIP" id="DIP-58991N"/>
<dbReference type="IntAct" id="Q57130">
    <property type="interactions" value="2"/>
</dbReference>
<dbReference type="STRING" id="71421.HI_1471"/>
<dbReference type="TCDB" id="3.A.1.14.11">
    <property type="family name" value="the atp-binding cassette (abc) superfamily"/>
</dbReference>
<dbReference type="EnsemblBacteria" id="AAC23119">
    <property type="protein sequence ID" value="AAC23119"/>
    <property type="gene ID" value="HI_1471"/>
</dbReference>
<dbReference type="KEGG" id="hin:HI_1471"/>
<dbReference type="PATRIC" id="fig|71421.8.peg.1538"/>
<dbReference type="eggNOG" id="COG0609">
    <property type="taxonomic scope" value="Bacteria"/>
</dbReference>
<dbReference type="HOGENOM" id="CLU_013016_0_2_6"/>
<dbReference type="OrthoDB" id="9055647at2"/>
<dbReference type="PhylomeDB" id="Q57130"/>
<dbReference type="BioCyc" id="HINF71421:G1GJ1-1496-MONOMER"/>
<dbReference type="EvolutionaryTrace" id="Q57130"/>
<dbReference type="Proteomes" id="UP000000579">
    <property type="component" value="Chromosome"/>
</dbReference>
<dbReference type="GO" id="GO:0005886">
    <property type="term" value="C:plasma membrane"/>
    <property type="evidence" value="ECO:0000318"/>
    <property type="project" value="GO_Central"/>
</dbReference>
<dbReference type="GO" id="GO:0022857">
    <property type="term" value="F:transmembrane transporter activity"/>
    <property type="evidence" value="ECO:0000318"/>
    <property type="project" value="GO_Central"/>
</dbReference>
<dbReference type="GO" id="GO:0033214">
    <property type="term" value="P:siderophore-dependent iron import into cell"/>
    <property type="evidence" value="ECO:0000318"/>
    <property type="project" value="GO_Central"/>
</dbReference>
<dbReference type="CDD" id="cd06550">
    <property type="entry name" value="TM_ABC_iron-siderophores_like"/>
    <property type="match status" value="1"/>
</dbReference>
<dbReference type="FunFam" id="1.10.3470.10:FF:000001">
    <property type="entry name" value="Vitamin B12 ABC transporter permease BtuC"/>
    <property type="match status" value="1"/>
</dbReference>
<dbReference type="Gene3D" id="1.10.3470.10">
    <property type="entry name" value="ABC transporter involved in vitamin B12 uptake, BtuC"/>
    <property type="match status" value="1"/>
</dbReference>
<dbReference type="InterPro" id="IPR037294">
    <property type="entry name" value="ABC_BtuC-like"/>
</dbReference>
<dbReference type="InterPro" id="IPR000522">
    <property type="entry name" value="ABC_transptr_permease_BtuC"/>
</dbReference>
<dbReference type="PANTHER" id="PTHR30472">
    <property type="entry name" value="FERRIC ENTEROBACTIN TRANSPORT SYSTEM PERMEASE PROTEIN"/>
    <property type="match status" value="1"/>
</dbReference>
<dbReference type="PANTHER" id="PTHR30472:SF70">
    <property type="entry name" value="MOLYBDATE IMPORT SYSTEM PERMEASE PROTEIN MOLB"/>
    <property type="match status" value="1"/>
</dbReference>
<dbReference type="Pfam" id="PF01032">
    <property type="entry name" value="FecCD"/>
    <property type="match status" value="1"/>
</dbReference>
<dbReference type="SUPFAM" id="SSF81345">
    <property type="entry name" value="ABC transporter involved in vitamin B12 uptake, BtuC"/>
    <property type="match status" value="1"/>
</dbReference>
<protein>
    <recommendedName>
        <fullName evidence="9">Molybdate import system permease protein MolB</fullName>
    </recommendedName>
</protein>
<comment type="function">
    <text evidence="4 7">Part of the ABC transporter complex MolBCA involved in molybdate import (PubMed:22078568, PubMed:24722984). Responsible for the translocation of the substrate across the membrane (PubMed:24722984). Functions as a low-affinity molybdate transporter (PubMed:24722984).</text>
</comment>
<comment type="activity regulation">
    <text evidence="5">The MolBCA complex shows a decrease in affinity in the presence of increasing concentrations of substrate and nucleotide.</text>
</comment>
<comment type="subunit">
    <text evidence="1 2 3 5 6">The complex is composed of two ATP-binding proteins (MolC), two transmembrane proteins (MolB) and a solute-binding protein (MolA).</text>
</comment>
<comment type="interaction">
    <interactant intactId="EBI-9013882">
        <id>Q57130</id>
    </interactant>
    <interactant intactId="EBI-15837683">
        <id>P44206</id>
        <label>molA</label>
    </interactant>
    <organismsDiffer>false</organismsDiffer>
    <experiments>2</experiments>
</comment>
<comment type="interaction">
    <interactant intactId="EBI-9013882">
        <id>Q57130</id>
    </interactant>
    <interactant intactId="EBI-9013875">
        <id>Q57399</id>
        <label>molC</label>
    </interactant>
    <organismsDiffer>false</organismsDiffer>
    <experiments>2</experiments>
</comment>
<comment type="subcellular location">
    <subcellularLocation>
        <location evidence="1">Cell inner membrane</location>
        <topology evidence="1">Multi-pass membrane protein</topology>
    </subcellularLocation>
</comment>
<comment type="induction">
    <text evidence="7">Expression is repressed by molybdate.</text>
</comment>
<comment type="domain">
    <text evidence="2 6">The transition from the outward-facing to the inward-facing conformation is realized through the asymmetric motion of individual subunits of the transporter (PubMed:19254551). Nucleotide binding is coupled to a conformational shift at the periplasmic gate. This shift is akin to unlocking a swinging door: allowing just enough space for molybdate to slip into the cell. The lower cytoplasmic gate, identified as gate I, remains open throughout the MolBC-A mechanism, and cytoplasmic gate II closes in the presence of nucleotide (PubMed:23709218).</text>
</comment>
<comment type="similarity">
    <text evidence="9">Belongs to the binding-protein-dependent transport system permease family. FecCD subfamily.</text>
</comment>
<feature type="chain" id="PRO_0000060281" description="Molybdate import system permease protein MolB">
    <location>
        <begin position="1"/>
        <end position="337"/>
    </location>
</feature>
<feature type="topological domain" description="Cytoplasmic" evidence="1">
    <location>
        <begin position="1"/>
        <end position="5"/>
    </location>
</feature>
<feature type="transmembrane region" description="Helical" evidence="1">
    <location>
        <begin position="6"/>
        <end position="25"/>
    </location>
</feature>
<feature type="topological domain" description="Periplasmic" evidence="1">
    <location>
        <begin position="26"/>
        <end position="51"/>
    </location>
</feature>
<feature type="transmembrane region" description="Helical" evidence="1">
    <location>
        <begin position="52"/>
        <end position="87"/>
    </location>
</feature>
<feature type="topological domain" description="Cytoplasmic" evidence="1">
    <location>
        <begin position="88"/>
        <end position="98"/>
    </location>
</feature>
<feature type="transmembrane region" description="Helical" evidence="1">
    <location>
        <begin position="99"/>
        <end position="113"/>
    </location>
</feature>
<feature type="topological domain" description="Periplasmic" evidence="1">
    <location>
        <begin position="114"/>
        <end position="116"/>
    </location>
</feature>
<feature type="transmembrane region" description="Helical" evidence="1">
    <location>
        <begin position="117"/>
        <end position="140"/>
    </location>
</feature>
<feature type="topological domain" description="Cytoplasmic" evidence="1">
    <location>
        <begin position="141"/>
        <end position="146"/>
    </location>
</feature>
<feature type="transmembrane region" description="Helical" evidence="1">
    <location>
        <begin position="147"/>
        <end position="171"/>
    </location>
</feature>
<feature type="topological domain" description="Periplasmic" evidence="1">
    <location>
        <begin position="172"/>
        <end position="193"/>
    </location>
</feature>
<feature type="transmembrane region" description="Helical" evidence="1">
    <location>
        <begin position="194"/>
        <end position="214"/>
    </location>
</feature>
<feature type="topological domain" description="Cytoplasmic" evidence="1">
    <location>
        <begin position="215"/>
        <end position="234"/>
    </location>
</feature>
<feature type="transmembrane region" description="Helical" evidence="1">
    <location>
        <begin position="235"/>
        <end position="257"/>
    </location>
</feature>
<feature type="topological domain" description="Periplasmic" evidence="1">
    <location>
        <begin position="258"/>
        <end position="264"/>
    </location>
</feature>
<feature type="transmembrane region" description="Helical" evidence="1">
    <location>
        <begin position="265"/>
        <end position="275"/>
    </location>
</feature>
<feature type="topological domain" description="Cytoplasmic" evidence="1">
    <location>
        <begin position="276"/>
        <end position="278"/>
    </location>
</feature>
<feature type="transmembrane region" description="Helical" evidence="1">
    <location>
        <begin position="279"/>
        <end position="304"/>
    </location>
</feature>
<feature type="topological domain" description="Periplasmic" evidence="1">
    <location>
        <begin position="305"/>
        <end position="310"/>
    </location>
</feature>
<feature type="transmembrane region" description="Helical" evidence="1">
    <location>
        <begin position="311"/>
        <end position="329"/>
    </location>
</feature>
<feature type="topological domain" description="Cytoplasmic" evidence="1">
    <location>
        <begin position="330"/>
        <end position="337"/>
    </location>
</feature>
<feature type="helix" evidence="11">
    <location>
        <begin position="7"/>
        <end position="24"/>
    </location>
</feature>
<feature type="helix" evidence="11">
    <location>
        <begin position="53"/>
        <end position="60"/>
    </location>
</feature>
<feature type="helix" evidence="11">
    <location>
        <begin position="62"/>
        <end position="86"/>
    </location>
</feature>
<feature type="turn" evidence="11">
    <location>
        <begin position="94"/>
        <end position="97"/>
    </location>
</feature>
<feature type="helix" evidence="11">
    <location>
        <begin position="99"/>
        <end position="112"/>
    </location>
</feature>
<feature type="helix" evidence="11">
    <location>
        <begin position="117"/>
        <end position="139"/>
    </location>
</feature>
<feature type="helix" evidence="11">
    <location>
        <begin position="147"/>
        <end position="170"/>
    </location>
</feature>
<feature type="turn" evidence="11">
    <location>
        <begin position="174"/>
        <end position="176"/>
    </location>
</feature>
<feature type="helix" evidence="11">
    <location>
        <begin position="177"/>
        <end position="184"/>
    </location>
</feature>
<feature type="helix" evidence="11">
    <location>
        <begin position="194"/>
        <end position="213"/>
    </location>
</feature>
<feature type="turn" evidence="11">
    <location>
        <begin position="214"/>
        <end position="216"/>
    </location>
</feature>
<feature type="helix" evidence="11">
    <location>
        <begin position="217"/>
        <end position="222"/>
    </location>
</feature>
<feature type="helix" evidence="11">
    <location>
        <begin position="225"/>
        <end position="230"/>
    </location>
</feature>
<feature type="helix" evidence="11">
    <location>
        <begin position="235"/>
        <end position="257"/>
    </location>
</feature>
<feature type="helix" evidence="11">
    <location>
        <begin position="266"/>
        <end position="275"/>
    </location>
</feature>
<feature type="helix" evidence="11">
    <location>
        <begin position="279"/>
        <end position="303"/>
    </location>
</feature>
<feature type="helix" evidence="11">
    <location>
        <begin position="311"/>
        <end position="328"/>
    </location>
</feature>
<name>MOLB_HAEIN</name>
<accession>Q57130</accession>
<accession>O05065</accession>